<proteinExistence type="evidence at protein level"/>
<protein>
    <recommendedName>
        <fullName evidence="3">APK peptide</fullName>
    </recommendedName>
</protein>
<dbReference type="GO" id="GO:0005576">
    <property type="term" value="C:extracellular region"/>
    <property type="evidence" value="ECO:0007669"/>
    <property type="project" value="UniProtKB-SubCell"/>
</dbReference>
<dbReference type="GO" id="GO:0007218">
    <property type="term" value="P:neuropeptide signaling pathway"/>
    <property type="evidence" value="ECO:0007669"/>
    <property type="project" value="UniProtKB-KW"/>
</dbReference>
<feature type="peptide" id="PRO_0000419724" description="APK peptide" evidence="2">
    <location>
        <begin position="1"/>
        <end position="16"/>
    </location>
</feature>
<feature type="unsure residue" description="L or I" evidence="2">
    <location>
        <position position="5"/>
    </location>
</feature>
<feature type="unsure residue" description="L or I" evidence="2">
    <location>
        <position position="10"/>
    </location>
</feature>
<feature type="unsure residue" description="L or I" evidence="2">
    <location>
        <position position="11"/>
    </location>
</feature>
<feature type="unsure residue" evidence="2">
    <location>
        <begin position="12"/>
        <end position="16"/>
    </location>
</feature>
<sequence>SVAALAAQGLLYNAPK</sequence>
<evidence type="ECO:0000250" key="1">
    <source>
        <dbReference type="UniProtKB" id="Q9W0W6"/>
    </source>
</evidence>
<evidence type="ECO:0000269" key="2">
    <source>
    </source>
</evidence>
<evidence type="ECO:0000303" key="3">
    <source>
    </source>
</evidence>
<evidence type="ECO:0000305" key="4"/>
<reference evidence="4" key="1">
    <citation type="journal article" date="2012" name="PLoS ONE">
        <title>Peptidomics of the agriculturally damaging larval stage of the cabbage root fly Delia radicum (Diptera: Anthomyiidae).</title>
        <authorList>
            <person name="Zoephel J."/>
            <person name="Reiher W."/>
            <person name="Rexer K.-H."/>
            <person name="Kahnt J."/>
            <person name="Wegener C."/>
        </authorList>
    </citation>
    <scope>PROTEIN SEQUENCE</scope>
    <scope>TISSUE SPECIFICITY</scope>
    <scope>DEVELOPMENTAL STAGE</scope>
    <scope>MASS SPECTROMETRY</scope>
    <source>
        <tissue evidence="2">CNS</tissue>
    </source>
</reference>
<name>NPLP1_DELRA</name>
<organism>
    <name type="scientific">Delia radicum</name>
    <name type="common">Cabbage root fly</name>
    <name type="synonym">Anthomyia brassicae</name>
    <dbReference type="NCBI Taxonomy" id="30064"/>
    <lineage>
        <taxon>Eukaryota</taxon>
        <taxon>Metazoa</taxon>
        <taxon>Ecdysozoa</taxon>
        <taxon>Arthropoda</taxon>
        <taxon>Hexapoda</taxon>
        <taxon>Insecta</taxon>
        <taxon>Pterygota</taxon>
        <taxon>Neoptera</taxon>
        <taxon>Endopterygota</taxon>
        <taxon>Diptera</taxon>
        <taxon>Brachycera</taxon>
        <taxon>Muscomorpha</taxon>
        <taxon>Muscoidea</taxon>
        <taxon>Anthomyiidae</taxon>
        <taxon>Anthomyiinae</taxon>
        <taxon>Delia</taxon>
    </lineage>
</organism>
<keyword id="KW-0903">Direct protein sequencing</keyword>
<keyword id="KW-0527">Neuropeptide</keyword>
<keyword id="KW-0964">Secreted</keyword>
<comment type="subcellular location">
    <subcellularLocation>
        <location evidence="1">Secreted</location>
    </subcellularLocation>
</comment>
<comment type="tissue specificity">
    <text evidence="2">Expressed in the CNS but not in midgut, ring gland, thoracic perisympathetic organs (tPSO) and abdominal perisympathetic organs (aPSO) (at protein level).</text>
</comment>
<comment type="developmental stage">
    <text evidence="2">Detected in larvae.</text>
</comment>
<comment type="mass spectrometry"/>
<accession>B3EWM9</accession>